<organism>
    <name type="scientific">Schizosaccharomyces pombe (strain 972 / ATCC 24843)</name>
    <name type="common">Fission yeast</name>
    <dbReference type="NCBI Taxonomy" id="284812"/>
    <lineage>
        <taxon>Eukaryota</taxon>
        <taxon>Fungi</taxon>
        <taxon>Dikarya</taxon>
        <taxon>Ascomycota</taxon>
        <taxon>Taphrinomycotina</taxon>
        <taxon>Schizosaccharomycetes</taxon>
        <taxon>Schizosaccharomycetales</taxon>
        <taxon>Schizosaccharomycetaceae</taxon>
        <taxon>Schizosaccharomyces</taxon>
    </lineage>
</organism>
<accession>O74884</accession>
<reference key="1">
    <citation type="submission" date="1999-09" db="EMBL/GenBank/DDBJ databases">
        <title>S.pombe ribosomal protein L24 homolog.</title>
        <authorList>
            <person name="Kawamukai M."/>
        </authorList>
    </citation>
    <scope>NUCLEOTIDE SEQUENCE [MRNA]</scope>
</reference>
<reference key="2">
    <citation type="journal article" date="2002" name="Nature">
        <title>The genome sequence of Schizosaccharomyces pombe.</title>
        <authorList>
            <person name="Wood V."/>
            <person name="Gwilliam R."/>
            <person name="Rajandream M.A."/>
            <person name="Lyne M.H."/>
            <person name="Lyne R."/>
            <person name="Stewart A."/>
            <person name="Sgouros J.G."/>
            <person name="Peat N."/>
            <person name="Hayles J."/>
            <person name="Baker S.G."/>
            <person name="Basham D."/>
            <person name="Bowman S."/>
            <person name="Brooks K."/>
            <person name="Brown D."/>
            <person name="Brown S."/>
            <person name="Chillingworth T."/>
            <person name="Churcher C.M."/>
            <person name="Collins M."/>
            <person name="Connor R."/>
            <person name="Cronin A."/>
            <person name="Davis P."/>
            <person name="Feltwell T."/>
            <person name="Fraser A."/>
            <person name="Gentles S."/>
            <person name="Goble A."/>
            <person name="Hamlin N."/>
            <person name="Harris D.E."/>
            <person name="Hidalgo J."/>
            <person name="Hodgson G."/>
            <person name="Holroyd S."/>
            <person name="Hornsby T."/>
            <person name="Howarth S."/>
            <person name="Huckle E.J."/>
            <person name="Hunt S."/>
            <person name="Jagels K."/>
            <person name="James K.D."/>
            <person name="Jones L."/>
            <person name="Jones M."/>
            <person name="Leather S."/>
            <person name="McDonald S."/>
            <person name="McLean J."/>
            <person name="Mooney P."/>
            <person name="Moule S."/>
            <person name="Mungall K.L."/>
            <person name="Murphy L.D."/>
            <person name="Niblett D."/>
            <person name="Odell C."/>
            <person name="Oliver K."/>
            <person name="O'Neil S."/>
            <person name="Pearson D."/>
            <person name="Quail M.A."/>
            <person name="Rabbinowitsch E."/>
            <person name="Rutherford K.M."/>
            <person name="Rutter S."/>
            <person name="Saunders D."/>
            <person name="Seeger K."/>
            <person name="Sharp S."/>
            <person name="Skelton J."/>
            <person name="Simmonds M.N."/>
            <person name="Squares R."/>
            <person name="Squares S."/>
            <person name="Stevens K."/>
            <person name="Taylor K."/>
            <person name="Taylor R.G."/>
            <person name="Tivey A."/>
            <person name="Walsh S.V."/>
            <person name="Warren T."/>
            <person name="Whitehead S."/>
            <person name="Woodward J.R."/>
            <person name="Volckaert G."/>
            <person name="Aert R."/>
            <person name="Robben J."/>
            <person name="Grymonprez B."/>
            <person name="Weltjens I."/>
            <person name="Vanstreels E."/>
            <person name="Rieger M."/>
            <person name="Schaefer M."/>
            <person name="Mueller-Auer S."/>
            <person name="Gabel C."/>
            <person name="Fuchs M."/>
            <person name="Duesterhoeft A."/>
            <person name="Fritzc C."/>
            <person name="Holzer E."/>
            <person name="Moestl D."/>
            <person name="Hilbert H."/>
            <person name="Borzym K."/>
            <person name="Langer I."/>
            <person name="Beck A."/>
            <person name="Lehrach H."/>
            <person name="Reinhardt R."/>
            <person name="Pohl T.M."/>
            <person name="Eger P."/>
            <person name="Zimmermann W."/>
            <person name="Wedler H."/>
            <person name="Wambutt R."/>
            <person name="Purnelle B."/>
            <person name="Goffeau A."/>
            <person name="Cadieu E."/>
            <person name="Dreano S."/>
            <person name="Gloux S."/>
            <person name="Lelaure V."/>
            <person name="Mottier S."/>
            <person name="Galibert F."/>
            <person name="Aves S.J."/>
            <person name="Xiang Z."/>
            <person name="Hunt C."/>
            <person name="Moore K."/>
            <person name="Hurst S.M."/>
            <person name="Lucas M."/>
            <person name="Rochet M."/>
            <person name="Gaillardin C."/>
            <person name="Tallada V.A."/>
            <person name="Garzon A."/>
            <person name="Thode G."/>
            <person name="Daga R.R."/>
            <person name="Cruzado L."/>
            <person name="Jimenez J."/>
            <person name="Sanchez M."/>
            <person name="del Rey F."/>
            <person name="Benito J."/>
            <person name="Dominguez A."/>
            <person name="Revuelta J.L."/>
            <person name="Moreno S."/>
            <person name="Armstrong J."/>
            <person name="Forsburg S.L."/>
            <person name="Cerutti L."/>
            <person name="Lowe T."/>
            <person name="McCombie W.R."/>
            <person name="Paulsen I."/>
            <person name="Potashkin J."/>
            <person name="Shpakovski G.V."/>
            <person name="Ussery D."/>
            <person name="Barrell B.G."/>
            <person name="Nurse P."/>
        </authorList>
    </citation>
    <scope>NUCLEOTIDE SEQUENCE [LARGE SCALE GENOMIC DNA]</scope>
    <source>
        <strain>972 / ATCC 24843</strain>
    </source>
</reference>
<reference key="3">
    <citation type="journal article" date="2006" name="Nat. Biotechnol.">
        <title>ORFeome cloning and global analysis of protein localization in the fission yeast Schizosaccharomyces pombe.</title>
        <authorList>
            <person name="Matsuyama A."/>
            <person name="Arai R."/>
            <person name="Yashiroda Y."/>
            <person name="Shirai A."/>
            <person name="Kamata A."/>
            <person name="Sekido S."/>
            <person name="Kobayashi Y."/>
            <person name="Hashimoto A."/>
            <person name="Hamamoto M."/>
            <person name="Hiraoka Y."/>
            <person name="Horinouchi S."/>
            <person name="Yoshida M."/>
        </authorList>
    </citation>
    <scope>SUBCELLULAR LOCATION [LARGE SCALE ANALYSIS]</scope>
</reference>
<reference key="4">
    <citation type="journal article" date="2008" name="J. Proteome Res.">
        <title>Phosphoproteome analysis of fission yeast.</title>
        <authorList>
            <person name="Wilson-Grady J.T."/>
            <person name="Villen J."/>
            <person name="Gygi S.P."/>
        </authorList>
    </citation>
    <scope>PHOSPHORYLATION [LARGE SCALE ANALYSIS] AT SER-50</scope>
    <scope>IDENTIFICATION BY MASS SPECTROMETRY</scope>
</reference>
<protein>
    <recommendedName>
        <fullName evidence="5">Large ribosomal subunit protein eL24B</fullName>
    </recommendedName>
    <alternativeName>
        <fullName>60S ribosomal protein L24-B</fullName>
    </alternativeName>
</protein>
<name>RL24B_SCHPO</name>
<comment type="function">
    <text evidence="1">Component of the ribosome, a large ribonucleoprotein complex responsible for the synthesis of proteins in the cell. The small ribosomal subunit (SSU) binds messenger RNAs (mRNAs) and translates the encoded message by selecting cognate aminoacyl-transfer RNA (tRNA) molecules. The large subunit (LSU) contains the ribosomal catalytic site termed the peptidyl transferase center (PTC), which catalyzes the formation of peptide bonds, thereby polymerizing the amino acids delivered by tRNAs into a polypeptide chain. The nascent polypeptides leave the ribosome through a tunnel in the LSU and interact with protein factors that function in enzymatic processing, targeting, and the membrane insertion of nascent chains at the exit of the ribosomal tunnel.</text>
</comment>
<comment type="subunit">
    <text evidence="1">Component of the large ribosomal subunit (LSU). Mature yeast ribosomes consist of a small (40S) and a large (60S) subunit. The 40S small subunit contains 1 molecule of ribosomal RNA (18S rRNA) and at least 33 different proteins. The large 60S subunit contains 3 rRNA molecules (25S, 5.8S and 5S rRNA) and at least 46 different proteins.</text>
</comment>
<comment type="subcellular location">
    <subcellularLocation>
        <location evidence="3">Cytoplasm</location>
    </subcellularLocation>
</comment>
<comment type="miscellaneous">
    <text>There are 2 genes for eL24 in S.pombe.</text>
</comment>
<comment type="similarity">
    <text evidence="5">Belongs to the eukaryotic ribosomal protein eL24 family.</text>
</comment>
<dbReference type="EMBL" id="AB032714">
    <property type="protein sequence ID" value="BAA84653.1"/>
    <property type="molecule type" value="mRNA"/>
</dbReference>
<dbReference type="EMBL" id="CU329672">
    <property type="protein sequence ID" value="CAA20919.1"/>
    <property type="molecule type" value="Genomic_DNA"/>
</dbReference>
<dbReference type="PIR" id="T41324">
    <property type="entry name" value="T41324"/>
</dbReference>
<dbReference type="RefSeq" id="NP_587714.1">
    <property type="nucleotide sequence ID" value="NM_001022709.2"/>
</dbReference>
<dbReference type="PDB" id="9AXT">
    <property type="method" value="EM"/>
    <property type="resolution" value="2.40 A"/>
    <property type="chains" value="Bi=1-149"/>
</dbReference>
<dbReference type="PDB" id="9AXU">
    <property type="method" value="EM"/>
    <property type="resolution" value="1.94 A"/>
    <property type="chains" value="i=1-149"/>
</dbReference>
<dbReference type="PDB" id="9AXV">
    <property type="method" value="EM"/>
    <property type="resolution" value="2.40 A"/>
    <property type="chains" value="Bi=1-149"/>
</dbReference>
<dbReference type="PDBsum" id="9AXT"/>
<dbReference type="PDBsum" id="9AXU"/>
<dbReference type="PDBsum" id="9AXV"/>
<dbReference type="EMDB" id="EMD-43972"/>
<dbReference type="EMDB" id="EMD-43973"/>
<dbReference type="EMDB" id="EMD-43976"/>
<dbReference type="SMR" id="O74884"/>
<dbReference type="BioGRID" id="275430">
    <property type="interactions" value="23"/>
</dbReference>
<dbReference type="FunCoup" id="O74884">
    <property type="interactions" value="537"/>
</dbReference>
<dbReference type="IntAct" id="O74884">
    <property type="interactions" value="2"/>
</dbReference>
<dbReference type="STRING" id="284812.O74884"/>
<dbReference type="iPTMnet" id="O74884"/>
<dbReference type="PaxDb" id="4896-SPCC330.14c.1"/>
<dbReference type="EnsemblFungi" id="SPCC330.14c.1">
    <property type="protein sequence ID" value="SPCC330.14c.1:pep"/>
    <property type="gene ID" value="SPCC330.14c"/>
</dbReference>
<dbReference type="GeneID" id="2538849"/>
<dbReference type="KEGG" id="spo:2538849"/>
<dbReference type="PomBase" id="SPCC330.14c">
    <property type="gene designation" value="rpl2402"/>
</dbReference>
<dbReference type="VEuPathDB" id="FungiDB:SPCC330.14c"/>
<dbReference type="eggNOG" id="KOG1722">
    <property type="taxonomic scope" value="Eukaryota"/>
</dbReference>
<dbReference type="HOGENOM" id="CLU_106411_0_0_1"/>
<dbReference type="InParanoid" id="O74884"/>
<dbReference type="OMA" id="QVFRRMH"/>
<dbReference type="PhylomeDB" id="O74884"/>
<dbReference type="Reactome" id="R-SPO-156827">
    <property type="pathway name" value="L13a-mediated translational silencing of Ceruloplasmin expression"/>
</dbReference>
<dbReference type="Reactome" id="R-SPO-1799339">
    <property type="pathway name" value="SRP-dependent cotranslational protein targeting to membrane"/>
</dbReference>
<dbReference type="Reactome" id="R-SPO-72689">
    <property type="pathway name" value="Formation of a pool of free 40S subunits"/>
</dbReference>
<dbReference type="Reactome" id="R-SPO-72706">
    <property type="pathway name" value="GTP hydrolysis and joining of the 60S ribosomal subunit"/>
</dbReference>
<dbReference type="Reactome" id="R-SPO-975956">
    <property type="pathway name" value="Nonsense Mediated Decay (NMD) independent of the Exon Junction Complex (EJC)"/>
</dbReference>
<dbReference type="Reactome" id="R-SPO-975957">
    <property type="pathway name" value="Nonsense Mediated Decay (NMD) enhanced by the Exon Junction Complex (EJC)"/>
</dbReference>
<dbReference type="PRO" id="PR:O74884"/>
<dbReference type="Proteomes" id="UP000002485">
    <property type="component" value="Chromosome III"/>
</dbReference>
<dbReference type="GO" id="GO:0005829">
    <property type="term" value="C:cytosol"/>
    <property type="evidence" value="ECO:0007005"/>
    <property type="project" value="PomBase"/>
</dbReference>
<dbReference type="GO" id="GO:0022625">
    <property type="term" value="C:cytosolic large ribosomal subunit"/>
    <property type="evidence" value="ECO:0000269"/>
    <property type="project" value="PomBase"/>
</dbReference>
<dbReference type="GO" id="GO:0003729">
    <property type="term" value="F:mRNA binding"/>
    <property type="evidence" value="ECO:0000318"/>
    <property type="project" value="GO_Central"/>
</dbReference>
<dbReference type="GO" id="GO:0003735">
    <property type="term" value="F:structural constituent of ribosome"/>
    <property type="evidence" value="ECO:0000318"/>
    <property type="project" value="GO_Central"/>
</dbReference>
<dbReference type="GO" id="GO:0002181">
    <property type="term" value="P:cytoplasmic translation"/>
    <property type="evidence" value="ECO:0000318"/>
    <property type="project" value="GO_Central"/>
</dbReference>
<dbReference type="CDD" id="cd00472">
    <property type="entry name" value="Ribosomal_L24e_L24"/>
    <property type="match status" value="1"/>
</dbReference>
<dbReference type="FunFam" id="2.30.170.20:FF:000002">
    <property type="entry name" value="60S ribosomal protein L24"/>
    <property type="match status" value="1"/>
</dbReference>
<dbReference type="Gene3D" id="6.10.250.1270">
    <property type="match status" value="1"/>
</dbReference>
<dbReference type="Gene3D" id="2.30.170.20">
    <property type="entry name" value="Ribosomal protein L24e"/>
    <property type="match status" value="1"/>
</dbReference>
<dbReference type="InterPro" id="IPR038630">
    <property type="entry name" value="L24e/L24_sf"/>
</dbReference>
<dbReference type="InterPro" id="IPR056366">
    <property type="entry name" value="Ribosomal_eL24"/>
</dbReference>
<dbReference type="InterPro" id="IPR000988">
    <property type="entry name" value="Ribosomal_eL24-rel_N"/>
</dbReference>
<dbReference type="InterPro" id="IPR023442">
    <property type="entry name" value="Ribosomal_eL24_CS"/>
</dbReference>
<dbReference type="PANTHER" id="PTHR10792">
    <property type="entry name" value="60S RIBOSOMAL PROTEIN L24"/>
    <property type="match status" value="1"/>
</dbReference>
<dbReference type="PANTHER" id="PTHR10792:SF1">
    <property type="entry name" value="RIBOSOMAL PROTEIN L24"/>
    <property type="match status" value="1"/>
</dbReference>
<dbReference type="Pfam" id="PF01246">
    <property type="entry name" value="Ribosomal_L24e"/>
    <property type="match status" value="1"/>
</dbReference>
<dbReference type="SUPFAM" id="SSF57716">
    <property type="entry name" value="Glucocorticoid receptor-like (DNA-binding domain)"/>
    <property type="match status" value="1"/>
</dbReference>
<dbReference type="PROSITE" id="PS01073">
    <property type="entry name" value="RIBOSOMAL_L24E"/>
    <property type="match status" value="1"/>
</dbReference>
<sequence length="149" mass="16912">MKVEVCSFSGSKVYPGAGRLFVRGDNKVFRFVNKKSESLFLQRKNPRRLSWTVLYRRMHKKGISEEHAKKRTRRTVKHQRGIVGANLDVIKEKRNQRPEVRAAARAAALKQRKDKRAASESEKKAIKAKSAASSARGQAIKNAKVAARR</sequence>
<keyword id="KW-0002">3D-structure</keyword>
<keyword id="KW-0963">Cytoplasm</keyword>
<keyword id="KW-0597">Phosphoprotein</keyword>
<keyword id="KW-1185">Reference proteome</keyword>
<keyword id="KW-0687">Ribonucleoprotein</keyword>
<keyword id="KW-0689">Ribosomal protein</keyword>
<gene>
    <name type="primary">rpl2402</name>
    <name type="synonym">rpl24</name>
    <name type="synonym">rpl24b</name>
    <name type="ORF">SPCC330.14c</name>
</gene>
<feature type="chain" id="PRO_0000136892" description="Large ribosomal subunit protein eL24B">
    <location>
        <begin position="1"/>
        <end position="149"/>
    </location>
</feature>
<feature type="region of interest" description="Disordered" evidence="2">
    <location>
        <begin position="96"/>
        <end position="149"/>
    </location>
</feature>
<feature type="compositionally biased region" description="Basic and acidic residues" evidence="2">
    <location>
        <begin position="116"/>
        <end position="125"/>
    </location>
</feature>
<feature type="modified residue" description="Phosphoserine" evidence="4">
    <location>
        <position position="50"/>
    </location>
</feature>
<proteinExistence type="evidence at protein level"/>
<evidence type="ECO:0000250" key="1">
    <source>
        <dbReference type="UniProtKB" id="P24000"/>
    </source>
</evidence>
<evidence type="ECO:0000256" key="2">
    <source>
        <dbReference type="SAM" id="MobiDB-lite"/>
    </source>
</evidence>
<evidence type="ECO:0000269" key="3">
    <source>
    </source>
</evidence>
<evidence type="ECO:0000269" key="4">
    <source>
    </source>
</evidence>
<evidence type="ECO:0000305" key="5"/>